<reference key="1">
    <citation type="journal article" date="2001" name="J. Bacteriol.">
        <title>Genome of the bacterium Streptococcus pneumoniae strain R6.</title>
        <authorList>
            <person name="Hoskins J."/>
            <person name="Alborn W.E. Jr."/>
            <person name="Arnold J."/>
            <person name="Blaszczak L.C."/>
            <person name="Burgett S."/>
            <person name="DeHoff B.S."/>
            <person name="Estrem S.T."/>
            <person name="Fritz L."/>
            <person name="Fu D.-J."/>
            <person name="Fuller W."/>
            <person name="Geringer C."/>
            <person name="Gilmour R."/>
            <person name="Glass J.S."/>
            <person name="Khoja H."/>
            <person name="Kraft A.R."/>
            <person name="Lagace R.E."/>
            <person name="LeBlanc D.J."/>
            <person name="Lee L.N."/>
            <person name="Lefkowitz E.J."/>
            <person name="Lu J."/>
            <person name="Matsushima P."/>
            <person name="McAhren S.M."/>
            <person name="McHenney M."/>
            <person name="McLeaster K."/>
            <person name="Mundy C.W."/>
            <person name="Nicas T.I."/>
            <person name="Norris F.H."/>
            <person name="O'Gara M."/>
            <person name="Peery R.B."/>
            <person name="Robertson G.T."/>
            <person name="Rockey P."/>
            <person name="Sun P.-M."/>
            <person name="Winkler M.E."/>
            <person name="Yang Y."/>
            <person name="Young-Bellido M."/>
            <person name="Zhao G."/>
            <person name="Zook C.A."/>
            <person name="Baltz R.H."/>
            <person name="Jaskunas S.R."/>
            <person name="Rosteck P.R. Jr."/>
            <person name="Skatrud P.L."/>
            <person name="Glass J.I."/>
        </authorList>
    </citation>
    <scope>NUCLEOTIDE SEQUENCE [LARGE SCALE GENOMIC DNA]</scope>
    <source>
        <strain>ATCC BAA-255 / R6</strain>
    </source>
</reference>
<proteinExistence type="inferred from homology"/>
<organism>
    <name type="scientific">Streptococcus pneumoniae (strain ATCC BAA-255 / R6)</name>
    <dbReference type="NCBI Taxonomy" id="171101"/>
    <lineage>
        <taxon>Bacteria</taxon>
        <taxon>Bacillati</taxon>
        <taxon>Bacillota</taxon>
        <taxon>Bacilli</taxon>
        <taxon>Lactobacillales</taxon>
        <taxon>Streptococcaceae</taxon>
        <taxon>Streptococcus</taxon>
    </lineage>
</organism>
<feature type="chain" id="PRO_0000148849" description="Aspartyl/glutamyl-tRNA(Asn/Gln) amidotransferase subunit B">
    <location>
        <begin position="1"/>
        <end position="480"/>
    </location>
</feature>
<accession>Q8DR11</accession>
<dbReference type="EC" id="6.3.5.-" evidence="1"/>
<dbReference type="EMBL" id="AE007317">
    <property type="protein sequence ID" value="AAK99197.1"/>
    <property type="molecule type" value="Genomic_DNA"/>
</dbReference>
<dbReference type="PIR" id="A97921">
    <property type="entry name" value="A97921"/>
</dbReference>
<dbReference type="RefSeq" id="NP_357987.1">
    <property type="nucleotide sequence ID" value="NC_003098.1"/>
</dbReference>
<dbReference type="RefSeq" id="WP_001008652.1">
    <property type="nucleotide sequence ID" value="NC_003098.1"/>
</dbReference>
<dbReference type="SMR" id="Q8DR11"/>
<dbReference type="STRING" id="171101.spr0393"/>
<dbReference type="KEGG" id="spr:spr0393"/>
<dbReference type="PATRIC" id="fig|171101.6.peg.436"/>
<dbReference type="eggNOG" id="COG0064">
    <property type="taxonomic scope" value="Bacteria"/>
</dbReference>
<dbReference type="HOGENOM" id="CLU_019240_0_0_9"/>
<dbReference type="Proteomes" id="UP000000586">
    <property type="component" value="Chromosome"/>
</dbReference>
<dbReference type="GO" id="GO:0050566">
    <property type="term" value="F:asparaginyl-tRNA synthase (glutamine-hydrolyzing) activity"/>
    <property type="evidence" value="ECO:0007669"/>
    <property type="project" value="RHEA"/>
</dbReference>
<dbReference type="GO" id="GO:0005524">
    <property type="term" value="F:ATP binding"/>
    <property type="evidence" value="ECO:0007669"/>
    <property type="project" value="UniProtKB-KW"/>
</dbReference>
<dbReference type="GO" id="GO:0050567">
    <property type="term" value="F:glutaminyl-tRNA synthase (glutamine-hydrolyzing) activity"/>
    <property type="evidence" value="ECO:0000318"/>
    <property type="project" value="GO_Central"/>
</dbReference>
<dbReference type="GO" id="GO:0070681">
    <property type="term" value="P:glutaminyl-tRNAGln biosynthesis via transamidation"/>
    <property type="evidence" value="ECO:0000318"/>
    <property type="project" value="GO_Central"/>
</dbReference>
<dbReference type="GO" id="GO:0006412">
    <property type="term" value="P:translation"/>
    <property type="evidence" value="ECO:0007669"/>
    <property type="project" value="UniProtKB-UniRule"/>
</dbReference>
<dbReference type="FunFam" id="1.10.10.410:FF:000001">
    <property type="entry name" value="Aspartyl/glutamyl-tRNA(Asn/Gln) amidotransferase subunit B"/>
    <property type="match status" value="1"/>
</dbReference>
<dbReference type="FunFam" id="1.10.150.380:FF:000001">
    <property type="entry name" value="Aspartyl/glutamyl-tRNA(Asn/Gln) amidotransferase subunit B"/>
    <property type="match status" value="1"/>
</dbReference>
<dbReference type="Gene3D" id="1.10.10.410">
    <property type="match status" value="1"/>
</dbReference>
<dbReference type="Gene3D" id="1.10.150.380">
    <property type="entry name" value="GatB domain, N-terminal subdomain"/>
    <property type="match status" value="1"/>
</dbReference>
<dbReference type="HAMAP" id="MF_00121">
    <property type="entry name" value="GatB"/>
    <property type="match status" value="1"/>
</dbReference>
<dbReference type="InterPro" id="IPR017959">
    <property type="entry name" value="Asn/Gln-tRNA_amidoTrfase_suB/E"/>
</dbReference>
<dbReference type="InterPro" id="IPR006075">
    <property type="entry name" value="Asn/Gln-tRNA_Trfase_suB/E_cat"/>
</dbReference>
<dbReference type="InterPro" id="IPR018027">
    <property type="entry name" value="Asn/Gln_amidotransferase"/>
</dbReference>
<dbReference type="InterPro" id="IPR003789">
    <property type="entry name" value="Asn/Gln_tRNA_amidoTrase-B-like"/>
</dbReference>
<dbReference type="InterPro" id="IPR004413">
    <property type="entry name" value="GatB"/>
</dbReference>
<dbReference type="InterPro" id="IPR042114">
    <property type="entry name" value="GatB_C_1"/>
</dbReference>
<dbReference type="InterPro" id="IPR023168">
    <property type="entry name" value="GatB_Yqey_C_2"/>
</dbReference>
<dbReference type="InterPro" id="IPR017958">
    <property type="entry name" value="Gln-tRNA_amidoTrfase_suB_CS"/>
</dbReference>
<dbReference type="InterPro" id="IPR014746">
    <property type="entry name" value="Gln_synth/guanido_kin_cat_dom"/>
</dbReference>
<dbReference type="NCBIfam" id="TIGR00133">
    <property type="entry name" value="gatB"/>
    <property type="match status" value="1"/>
</dbReference>
<dbReference type="NCBIfam" id="NF004011">
    <property type="entry name" value="PRK05477.1-1"/>
    <property type="match status" value="1"/>
</dbReference>
<dbReference type="NCBIfam" id="NF004012">
    <property type="entry name" value="PRK05477.1-2"/>
    <property type="match status" value="1"/>
</dbReference>
<dbReference type="NCBIfam" id="NF004014">
    <property type="entry name" value="PRK05477.1-4"/>
    <property type="match status" value="1"/>
</dbReference>
<dbReference type="PANTHER" id="PTHR11659">
    <property type="entry name" value="GLUTAMYL-TRNA GLN AMIDOTRANSFERASE SUBUNIT B MITOCHONDRIAL AND PROKARYOTIC PET112-RELATED"/>
    <property type="match status" value="1"/>
</dbReference>
<dbReference type="PANTHER" id="PTHR11659:SF0">
    <property type="entry name" value="GLUTAMYL-TRNA(GLN) AMIDOTRANSFERASE SUBUNIT B, MITOCHONDRIAL"/>
    <property type="match status" value="1"/>
</dbReference>
<dbReference type="Pfam" id="PF02934">
    <property type="entry name" value="GatB_N"/>
    <property type="match status" value="1"/>
</dbReference>
<dbReference type="Pfam" id="PF02637">
    <property type="entry name" value="GatB_Yqey"/>
    <property type="match status" value="1"/>
</dbReference>
<dbReference type="SMART" id="SM00845">
    <property type="entry name" value="GatB_Yqey"/>
    <property type="match status" value="1"/>
</dbReference>
<dbReference type="SUPFAM" id="SSF89095">
    <property type="entry name" value="GatB/YqeY motif"/>
    <property type="match status" value="1"/>
</dbReference>
<dbReference type="SUPFAM" id="SSF55931">
    <property type="entry name" value="Glutamine synthetase/guanido kinase"/>
    <property type="match status" value="1"/>
</dbReference>
<dbReference type="PROSITE" id="PS01234">
    <property type="entry name" value="GATB"/>
    <property type="match status" value="1"/>
</dbReference>
<comment type="function">
    <text evidence="1">Allows the formation of correctly charged Asn-tRNA(Asn) or Gln-tRNA(Gln) through the transamidation of misacylated Asp-tRNA(Asn) or Glu-tRNA(Gln) in organisms which lack either or both of asparaginyl-tRNA or glutaminyl-tRNA synthetases. The reaction takes place in the presence of glutamine and ATP through an activated phospho-Asp-tRNA(Asn) or phospho-Glu-tRNA(Gln).</text>
</comment>
<comment type="catalytic activity">
    <reaction evidence="1">
        <text>L-glutamyl-tRNA(Gln) + L-glutamine + ATP + H2O = L-glutaminyl-tRNA(Gln) + L-glutamate + ADP + phosphate + H(+)</text>
        <dbReference type="Rhea" id="RHEA:17521"/>
        <dbReference type="Rhea" id="RHEA-COMP:9681"/>
        <dbReference type="Rhea" id="RHEA-COMP:9684"/>
        <dbReference type="ChEBI" id="CHEBI:15377"/>
        <dbReference type="ChEBI" id="CHEBI:15378"/>
        <dbReference type="ChEBI" id="CHEBI:29985"/>
        <dbReference type="ChEBI" id="CHEBI:30616"/>
        <dbReference type="ChEBI" id="CHEBI:43474"/>
        <dbReference type="ChEBI" id="CHEBI:58359"/>
        <dbReference type="ChEBI" id="CHEBI:78520"/>
        <dbReference type="ChEBI" id="CHEBI:78521"/>
        <dbReference type="ChEBI" id="CHEBI:456216"/>
    </reaction>
</comment>
<comment type="catalytic activity">
    <reaction evidence="1">
        <text>L-aspartyl-tRNA(Asn) + L-glutamine + ATP + H2O = L-asparaginyl-tRNA(Asn) + L-glutamate + ADP + phosphate + 2 H(+)</text>
        <dbReference type="Rhea" id="RHEA:14513"/>
        <dbReference type="Rhea" id="RHEA-COMP:9674"/>
        <dbReference type="Rhea" id="RHEA-COMP:9677"/>
        <dbReference type="ChEBI" id="CHEBI:15377"/>
        <dbReference type="ChEBI" id="CHEBI:15378"/>
        <dbReference type="ChEBI" id="CHEBI:29985"/>
        <dbReference type="ChEBI" id="CHEBI:30616"/>
        <dbReference type="ChEBI" id="CHEBI:43474"/>
        <dbReference type="ChEBI" id="CHEBI:58359"/>
        <dbReference type="ChEBI" id="CHEBI:78515"/>
        <dbReference type="ChEBI" id="CHEBI:78516"/>
        <dbReference type="ChEBI" id="CHEBI:456216"/>
    </reaction>
</comment>
<comment type="subunit">
    <text evidence="1">Heterotrimer of A, B and C subunits.</text>
</comment>
<comment type="similarity">
    <text evidence="1">Belongs to the GatB/GatE family. GatB subfamily.</text>
</comment>
<gene>
    <name evidence="1" type="primary">gatB</name>
    <name type="ordered locus">spr0393</name>
</gene>
<evidence type="ECO:0000255" key="1">
    <source>
        <dbReference type="HAMAP-Rule" id="MF_00121"/>
    </source>
</evidence>
<keyword id="KW-0067">ATP-binding</keyword>
<keyword id="KW-0436">Ligase</keyword>
<keyword id="KW-0547">Nucleotide-binding</keyword>
<keyword id="KW-0648">Protein biosynthesis</keyword>
<keyword id="KW-1185">Reference proteome</keyword>
<sequence>MNFETVIGLEVHVELNTNSKIFSPTSAHFGNDQNANTNVIDWSFPGVLPVLNKGVVDAGIKAALALNMDIHKKMHFDRKNYFYPDNPKAYQISQFDEPIGYNGWIEVELEDGTTKKIGIERAHLEEDAGKNTHGTDGYSYVDLNRQGVPLIEIVSEADMRSPEEAYAYLTALKEVIQYAGISDVKMEEGSMRVDANISLRPYGQEKFGTKTELKNLNSFSNVRKGLEYEVQRQAEILRSGGQIRQETRRYDEANKATILMRVKEGAADYRYFPEPDLPLFEISDEWIEEMRTELPEFPKERRARYVSDLGLSDYDASQLTANKVTSDFFEKAVALGGDAKQVSNWLQGEVAQFLNAEGKTLEQIELTPENLVEMIAIIEDGTISSKIAKKVFVHLAKNGGGAREYVEKAGMVQISDPAILIPIIHQVFADNEAAVADFKSGKRNADKAFTGFLMKATKGQANPQVALKLLAQELAKLKEN</sequence>
<protein>
    <recommendedName>
        <fullName evidence="1">Aspartyl/glutamyl-tRNA(Asn/Gln) amidotransferase subunit B</fullName>
        <shortName evidence="1">Asp/Glu-ADT subunit B</shortName>
        <ecNumber evidence="1">6.3.5.-</ecNumber>
    </recommendedName>
</protein>
<name>GATB_STRR6</name>